<comment type="function">
    <text evidence="1">One of the early assembly proteins it binds 23S rRNA. One of the proteins that surrounds the polypeptide exit tunnel on the outside of the ribosome. Forms the main docking site for trigger factor binding to the ribosome.</text>
</comment>
<comment type="subunit">
    <text evidence="1">Part of the 50S ribosomal subunit. Contacts protein L29, and trigger factor when it is bound to the ribosome.</text>
</comment>
<comment type="similarity">
    <text evidence="1">Belongs to the universal ribosomal protein uL23 family.</text>
</comment>
<organism>
    <name type="scientific">Streptococcus pneumoniae (strain 70585)</name>
    <dbReference type="NCBI Taxonomy" id="488221"/>
    <lineage>
        <taxon>Bacteria</taxon>
        <taxon>Bacillati</taxon>
        <taxon>Bacillota</taxon>
        <taxon>Bacilli</taxon>
        <taxon>Lactobacillales</taxon>
        <taxon>Streptococcaceae</taxon>
        <taxon>Streptococcus</taxon>
    </lineage>
</organism>
<keyword id="KW-0687">Ribonucleoprotein</keyword>
<keyword id="KW-0689">Ribosomal protein</keyword>
<keyword id="KW-0694">RNA-binding</keyword>
<keyword id="KW-0699">rRNA-binding</keyword>
<sequence>MNLYDVIKKPVITESSMAQLEAGKYVFEVDTRAHKLLIKQAVEAAFEGVKVANVNTINVKPKAKRVGRYTGFTNKTKKAIITLTADSKAIELFAAEAE</sequence>
<gene>
    <name evidence="1" type="primary">rplW</name>
    <name type="ordered locus">SP70585_0267</name>
</gene>
<feature type="chain" id="PRO_1000184106" description="Large ribosomal subunit protein uL23">
    <location>
        <begin position="1"/>
        <end position="98"/>
    </location>
</feature>
<accession>C1CAL4</accession>
<name>RL23_STRP7</name>
<evidence type="ECO:0000255" key="1">
    <source>
        <dbReference type="HAMAP-Rule" id="MF_01369"/>
    </source>
</evidence>
<evidence type="ECO:0000305" key="2"/>
<reference key="1">
    <citation type="journal article" date="2010" name="Genome Biol.">
        <title>Structure and dynamics of the pan-genome of Streptococcus pneumoniae and closely related species.</title>
        <authorList>
            <person name="Donati C."/>
            <person name="Hiller N.L."/>
            <person name="Tettelin H."/>
            <person name="Muzzi A."/>
            <person name="Croucher N.J."/>
            <person name="Angiuoli S.V."/>
            <person name="Oggioni M."/>
            <person name="Dunning Hotopp J.C."/>
            <person name="Hu F.Z."/>
            <person name="Riley D.R."/>
            <person name="Covacci A."/>
            <person name="Mitchell T.J."/>
            <person name="Bentley S.D."/>
            <person name="Kilian M."/>
            <person name="Ehrlich G.D."/>
            <person name="Rappuoli R."/>
            <person name="Moxon E.R."/>
            <person name="Masignani V."/>
        </authorList>
    </citation>
    <scope>NUCLEOTIDE SEQUENCE [LARGE SCALE GENOMIC DNA]</scope>
    <source>
        <strain>70585</strain>
    </source>
</reference>
<proteinExistence type="inferred from homology"/>
<protein>
    <recommendedName>
        <fullName evidence="1">Large ribosomal subunit protein uL23</fullName>
    </recommendedName>
    <alternativeName>
        <fullName evidence="2">50S ribosomal protein L23</fullName>
    </alternativeName>
</protein>
<dbReference type="EMBL" id="CP000918">
    <property type="protein sequence ID" value="ACO16592.1"/>
    <property type="molecule type" value="Genomic_DNA"/>
</dbReference>
<dbReference type="RefSeq" id="WP_001055347.1">
    <property type="nucleotide sequence ID" value="NC_012468.1"/>
</dbReference>
<dbReference type="SMR" id="C1CAL4"/>
<dbReference type="KEGG" id="snm:SP70585_0267"/>
<dbReference type="HOGENOM" id="CLU_037562_3_2_9"/>
<dbReference type="Proteomes" id="UP000002211">
    <property type="component" value="Chromosome"/>
</dbReference>
<dbReference type="GO" id="GO:1990904">
    <property type="term" value="C:ribonucleoprotein complex"/>
    <property type="evidence" value="ECO:0007669"/>
    <property type="project" value="UniProtKB-KW"/>
</dbReference>
<dbReference type="GO" id="GO:0005840">
    <property type="term" value="C:ribosome"/>
    <property type="evidence" value="ECO:0007669"/>
    <property type="project" value="UniProtKB-KW"/>
</dbReference>
<dbReference type="GO" id="GO:0019843">
    <property type="term" value="F:rRNA binding"/>
    <property type="evidence" value="ECO:0007669"/>
    <property type="project" value="UniProtKB-UniRule"/>
</dbReference>
<dbReference type="GO" id="GO:0003735">
    <property type="term" value="F:structural constituent of ribosome"/>
    <property type="evidence" value="ECO:0007669"/>
    <property type="project" value="InterPro"/>
</dbReference>
<dbReference type="GO" id="GO:0006412">
    <property type="term" value="P:translation"/>
    <property type="evidence" value="ECO:0007669"/>
    <property type="project" value="UniProtKB-UniRule"/>
</dbReference>
<dbReference type="FunFam" id="3.30.70.330:FF:000001">
    <property type="entry name" value="50S ribosomal protein L23"/>
    <property type="match status" value="1"/>
</dbReference>
<dbReference type="Gene3D" id="3.30.70.330">
    <property type="match status" value="1"/>
</dbReference>
<dbReference type="HAMAP" id="MF_01369_B">
    <property type="entry name" value="Ribosomal_uL23_B"/>
    <property type="match status" value="1"/>
</dbReference>
<dbReference type="InterPro" id="IPR012677">
    <property type="entry name" value="Nucleotide-bd_a/b_plait_sf"/>
</dbReference>
<dbReference type="InterPro" id="IPR013025">
    <property type="entry name" value="Ribosomal_uL23-like"/>
</dbReference>
<dbReference type="InterPro" id="IPR012678">
    <property type="entry name" value="Ribosomal_uL23/eL15/eS24_sf"/>
</dbReference>
<dbReference type="InterPro" id="IPR001014">
    <property type="entry name" value="Ribosomal_uL23_CS"/>
</dbReference>
<dbReference type="NCBIfam" id="NF004361">
    <property type="entry name" value="PRK05738.2-1"/>
    <property type="match status" value="1"/>
</dbReference>
<dbReference type="NCBIfam" id="NF004363">
    <property type="entry name" value="PRK05738.2-4"/>
    <property type="match status" value="1"/>
</dbReference>
<dbReference type="PANTHER" id="PTHR11620">
    <property type="entry name" value="60S RIBOSOMAL PROTEIN L23A"/>
    <property type="match status" value="1"/>
</dbReference>
<dbReference type="Pfam" id="PF00276">
    <property type="entry name" value="Ribosomal_L23"/>
    <property type="match status" value="1"/>
</dbReference>
<dbReference type="SUPFAM" id="SSF54189">
    <property type="entry name" value="Ribosomal proteins S24e, L23 and L15e"/>
    <property type="match status" value="1"/>
</dbReference>
<dbReference type="PROSITE" id="PS00050">
    <property type="entry name" value="RIBOSOMAL_L23"/>
    <property type="match status" value="1"/>
</dbReference>